<dbReference type="EC" id="2.5.1.16" evidence="1"/>
<dbReference type="EMBL" id="L77117">
    <property type="protein sequence ID" value="AAB98300.1"/>
    <property type="molecule type" value="Genomic_DNA"/>
</dbReference>
<dbReference type="PIR" id="B64339">
    <property type="entry name" value="B64339"/>
</dbReference>
<dbReference type="RefSeq" id="WP_010869811.1">
    <property type="nucleotide sequence ID" value="NC_000909.1"/>
</dbReference>
<dbReference type="SMR" id="Q57761"/>
<dbReference type="FunCoup" id="Q57761">
    <property type="interactions" value="171"/>
</dbReference>
<dbReference type="STRING" id="243232.MJ_0313"/>
<dbReference type="PaxDb" id="243232-MJ_0313"/>
<dbReference type="EnsemblBacteria" id="AAB98300">
    <property type="protein sequence ID" value="AAB98300"/>
    <property type="gene ID" value="MJ_0313"/>
</dbReference>
<dbReference type="GeneID" id="1451168"/>
<dbReference type="KEGG" id="mja:MJ_0313"/>
<dbReference type="eggNOG" id="arCOG00050">
    <property type="taxonomic scope" value="Archaea"/>
</dbReference>
<dbReference type="HOGENOM" id="CLU_048199_0_0_2"/>
<dbReference type="InParanoid" id="Q57761"/>
<dbReference type="OrthoDB" id="10538at2157"/>
<dbReference type="PhylomeDB" id="Q57761"/>
<dbReference type="UniPathway" id="UPA00248">
    <property type="reaction ID" value="UER00314"/>
</dbReference>
<dbReference type="Proteomes" id="UP000000805">
    <property type="component" value="Chromosome"/>
</dbReference>
<dbReference type="GO" id="GO:0005737">
    <property type="term" value="C:cytoplasm"/>
    <property type="evidence" value="ECO:0007669"/>
    <property type="project" value="UniProtKB-SubCell"/>
</dbReference>
<dbReference type="GO" id="GO:0004766">
    <property type="term" value="F:spermidine synthase activity"/>
    <property type="evidence" value="ECO:0007669"/>
    <property type="project" value="UniProtKB-UniRule"/>
</dbReference>
<dbReference type="GO" id="GO:0008295">
    <property type="term" value="P:spermidine biosynthetic process"/>
    <property type="evidence" value="ECO:0007669"/>
    <property type="project" value="UniProtKB-UniRule"/>
</dbReference>
<dbReference type="CDD" id="cd02440">
    <property type="entry name" value="AdoMet_MTases"/>
    <property type="match status" value="1"/>
</dbReference>
<dbReference type="FunFam" id="3.40.50.150:FF:000056">
    <property type="entry name" value="Polyamine aminopropyltransferase"/>
    <property type="match status" value="1"/>
</dbReference>
<dbReference type="FunFam" id="2.30.140.10:FF:000024">
    <property type="entry name" value="Putative spermidine synthase"/>
    <property type="match status" value="1"/>
</dbReference>
<dbReference type="Gene3D" id="2.30.140.10">
    <property type="entry name" value="Spermidine synthase, tetramerisation domain"/>
    <property type="match status" value="1"/>
</dbReference>
<dbReference type="Gene3D" id="3.40.50.150">
    <property type="entry name" value="Vaccinia Virus protein VP39"/>
    <property type="match status" value="1"/>
</dbReference>
<dbReference type="HAMAP" id="MF_00198">
    <property type="entry name" value="Spermidine_synth"/>
    <property type="match status" value="1"/>
</dbReference>
<dbReference type="InterPro" id="IPR030374">
    <property type="entry name" value="PABS"/>
</dbReference>
<dbReference type="InterPro" id="IPR030373">
    <property type="entry name" value="PABS_CS"/>
</dbReference>
<dbReference type="InterPro" id="IPR029063">
    <property type="entry name" value="SAM-dependent_MTases_sf"/>
</dbReference>
<dbReference type="InterPro" id="IPR001045">
    <property type="entry name" value="Spermi_synthase"/>
</dbReference>
<dbReference type="InterPro" id="IPR035246">
    <property type="entry name" value="Spermidine_synt_N"/>
</dbReference>
<dbReference type="InterPro" id="IPR037163">
    <property type="entry name" value="Spermidine_synt_N_sf"/>
</dbReference>
<dbReference type="NCBIfam" id="NF002010">
    <property type="entry name" value="PRK00811.1"/>
    <property type="match status" value="1"/>
</dbReference>
<dbReference type="NCBIfam" id="TIGR00417">
    <property type="entry name" value="speE"/>
    <property type="match status" value="1"/>
</dbReference>
<dbReference type="PANTHER" id="PTHR11558:SF11">
    <property type="entry name" value="SPERMIDINE SYNTHASE"/>
    <property type="match status" value="1"/>
</dbReference>
<dbReference type="PANTHER" id="PTHR11558">
    <property type="entry name" value="SPERMIDINE/SPERMINE SYNTHASE"/>
    <property type="match status" value="1"/>
</dbReference>
<dbReference type="Pfam" id="PF17284">
    <property type="entry name" value="Spermine_synt_N"/>
    <property type="match status" value="1"/>
</dbReference>
<dbReference type="Pfam" id="PF01564">
    <property type="entry name" value="Spermine_synth"/>
    <property type="match status" value="1"/>
</dbReference>
<dbReference type="SUPFAM" id="SSF53335">
    <property type="entry name" value="S-adenosyl-L-methionine-dependent methyltransferases"/>
    <property type="match status" value="1"/>
</dbReference>
<dbReference type="PROSITE" id="PS01330">
    <property type="entry name" value="PABS_1"/>
    <property type="match status" value="1"/>
</dbReference>
<dbReference type="PROSITE" id="PS51006">
    <property type="entry name" value="PABS_2"/>
    <property type="match status" value="1"/>
</dbReference>
<comment type="function">
    <text evidence="1">Catalyzes the irreversible transfer of a propylamine group from the amino donor S-adenosylmethioninamine (decarboxy-AdoMet) to putrescine (1,4-diaminobutane) to yield spermidine.</text>
</comment>
<comment type="catalytic activity">
    <reaction evidence="1">
        <text>S-adenosyl 3-(methylsulfanyl)propylamine + putrescine = S-methyl-5'-thioadenosine + spermidine + H(+)</text>
        <dbReference type="Rhea" id="RHEA:12721"/>
        <dbReference type="ChEBI" id="CHEBI:15378"/>
        <dbReference type="ChEBI" id="CHEBI:17509"/>
        <dbReference type="ChEBI" id="CHEBI:57443"/>
        <dbReference type="ChEBI" id="CHEBI:57834"/>
        <dbReference type="ChEBI" id="CHEBI:326268"/>
        <dbReference type="EC" id="2.5.1.16"/>
    </reaction>
</comment>
<comment type="pathway">
    <text evidence="1">Amine and polyamine biosynthesis; spermidine biosynthesis; spermidine from putrescine: step 1/1.</text>
</comment>
<comment type="subunit">
    <text evidence="1">Homodimer or homotetramer.</text>
</comment>
<comment type="subcellular location">
    <subcellularLocation>
        <location evidence="1">Cytoplasm</location>
    </subcellularLocation>
</comment>
<comment type="similarity">
    <text evidence="1">Belongs to the spermidine/spermine synthase family.</text>
</comment>
<sequence>MNQNNDFKCHIWFTEYHNNNVALSVRVKDILYREKSGFQEIEIIDTYDFGKALILDNTFQTTERDEFIYHELISHIPLFTHPNPRNVLVIGGGDGGTVREVVKHKSVETVDFVELDEKVIEACKKYMPKLSCEIDNEKVNLIITDGIKYVAETEKKYDVIIVDCPDPVGPAKGLFEKEFYKNVFKCLNDDGIMVQQSESPLYNLDLIQNICRYLKDAGFKIIMPYTYPMPTYPSGFWSFTLASKKYNPLEVDEARIKEALKDMETKYYDEEVHKGIFLAAPKFLKDAVKKALE</sequence>
<name>SPEE_METJA</name>
<organism>
    <name type="scientific">Methanocaldococcus jannaschii (strain ATCC 43067 / DSM 2661 / JAL-1 / JCM 10045 / NBRC 100440)</name>
    <name type="common">Methanococcus jannaschii</name>
    <dbReference type="NCBI Taxonomy" id="243232"/>
    <lineage>
        <taxon>Archaea</taxon>
        <taxon>Methanobacteriati</taxon>
        <taxon>Methanobacteriota</taxon>
        <taxon>Methanomada group</taxon>
        <taxon>Methanococci</taxon>
        <taxon>Methanococcales</taxon>
        <taxon>Methanocaldococcaceae</taxon>
        <taxon>Methanocaldococcus</taxon>
    </lineage>
</organism>
<accession>Q57761</accession>
<feature type="chain" id="PRO_0000156526" description="Polyamine aminopropyltransferase">
    <location>
        <begin position="1"/>
        <end position="293"/>
    </location>
</feature>
<feature type="domain" description="PABS" evidence="1">
    <location>
        <begin position="10"/>
        <end position="244"/>
    </location>
</feature>
<feature type="active site" description="Proton acceptor" evidence="1">
    <location>
        <position position="163"/>
    </location>
</feature>
<feature type="binding site" evidence="1">
    <location>
        <position position="39"/>
    </location>
    <ligand>
        <name>S-methyl-5'-thioadenosine</name>
        <dbReference type="ChEBI" id="CHEBI:17509"/>
    </ligand>
</feature>
<feature type="binding site" evidence="1">
    <location>
        <position position="70"/>
    </location>
    <ligand>
        <name>spermidine</name>
        <dbReference type="ChEBI" id="CHEBI:57834"/>
    </ligand>
</feature>
<feature type="binding site" evidence="1">
    <location>
        <position position="94"/>
    </location>
    <ligand>
        <name>spermidine</name>
        <dbReference type="ChEBI" id="CHEBI:57834"/>
    </ligand>
</feature>
<feature type="binding site" evidence="1">
    <location>
        <position position="114"/>
    </location>
    <ligand>
        <name>S-methyl-5'-thioadenosine</name>
        <dbReference type="ChEBI" id="CHEBI:17509"/>
    </ligand>
</feature>
<feature type="binding site" evidence="1">
    <location>
        <begin position="145"/>
        <end position="146"/>
    </location>
    <ligand>
        <name>S-methyl-5'-thioadenosine</name>
        <dbReference type="ChEBI" id="CHEBI:17509"/>
    </ligand>
</feature>
<feature type="binding site" evidence="1">
    <location>
        <begin position="163"/>
        <end position="166"/>
    </location>
    <ligand>
        <name>spermidine</name>
        <dbReference type="ChEBI" id="CHEBI:57834"/>
    </ligand>
</feature>
<feature type="binding site" evidence="1">
    <location>
        <position position="170"/>
    </location>
    <ligand>
        <name>S-methyl-5'-thioadenosine</name>
        <dbReference type="ChEBI" id="CHEBI:17509"/>
    </ligand>
</feature>
<gene>
    <name evidence="1" type="primary">speE</name>
    <name type="ordered locus">MJ0313</name>
</gene>
<protein>
    <recommendedName>
        <fullName evidence="1">Polyamine aminopropyltransferase</fullName>
    </recommendedName>
    <alternativeName>
        <fullName evidence="1">Putrescine aminopropyltransferase</fullName>
        <shortName evidence="1">PAPT</shortName>
    </alternativeName>
    <alternativeName>
        <fullName evidence="1">Spermidine synthase</fullName>
        <shortName evidence="1">SPDS</shortName>
        <shortName evidence="1">SPDSY</shortName>
        <ecNumber evidence="1">2.5.1.16</ecNumber>
    </alternativeName>
</protein>
<evidence type="ECO:0000255" key="1">
    <source>
        <dbReference type="HAMAP-Rule" id="MF_00198"/>
    </source>
</evidence>
<keyword id="KW-0963">Cytoplasm</keyword>
<keyword id="KW-0620">Polyamine biosynthesis</keyword>
<keyword id="KW-1185">Reference proteome</keyword>
<keyword id="KW-0745">Spermidine biosynthesis</keyword>
<keyword id="KW-0808">Transferase</keyword>
<reference key="1">
    <citation type="journal article" date="1996" name="Science">
        <title>Complete genome sequence of the methanogenic archaeon, Methanococcus jannaschii.</title>
        <authorList>
            <person name="Bult C.J."/>
            <person name="White O."/>
            <person name="Olsen G.J."/>
            <person name="Zhou L."/>
            <person name="Fleischmann R.D."/>
            <person name="Sutton G.G."/>
            <person name="Blake J.A."/>
            <person name="FitzGerald L.M."/>
            <person name="Clayton R.A."/>
            <person name="Gocayne J.D."/>
            <person name="Kerlavage A.R."/>
            <person name="Dougherty B.A."/>
            <person name="Tomb J.-F."/>
            <person name="Adams M.D."/>
            <person name="Reich C.I."/>
            <person name="Overbeek R."/>
            <person name="Kirkness E.F."/>
            <person name="Weinstock K.G."/>
            <person name="Merrick J.M."/>
            <person name="Glodek A."/>
            <person name="Scott J.L."/>
            <person name="Geoghagen N.S.M."/>
            <person name="Weidman J.F."/>
            <person name="Fuhrmann J.L."/>
            <person name="Nguyen D."/>
            <person name="Utterback T.R."/>
            <person name="Kelley J.M."/>
            <person name="Peterson J.D."/>
            <person name="Sadow P.W."/>
            <person name="Hanna M.C."/>
            <person name="Cotton M.D."/>
            <person name="Roberts K.M."/>
            <person name="Hurst M.A."/>
            <person name="Kaine B.P."/>
            <person name="Borodovsky M."/>
            <person name="Klenk H.-P."/>
            <person name="Fraser C.M."/>
            <person name="Smith H.O."/>
            <person name="Woese C.R."/>
            <person name="Venter J.C."/>
        </authorList>
    </citation>
    <scope>NUCLEOTIDE SEQUENCE [LARGE SCALE GENOMIC DNA]</scope>
    <source>
        <strain>ATCC 43067 / DSM 2661 / JAL-1 / JCM 10045 / NBRC 100440</strain>
    </source>
</reference>
<proteinExistence type="inferred from homology"/>